<proteinExistence type="inferred from homology"/>
<gene>
    <name evidence="1" type="primary">rplE</name>
    <name type="ordered locus">BVU_0793</name>
</gene>
<name>RL5_PHOV8</name>
<dbReference type="EMBL" id="CP000139">
    <property type="protein sequence ID" value="ABR38497.1"/>
    <property type="molecule type" value="Genomic_DNA"/>
</dbReference>
<dbReference type="RefSeq" id="WP_005844870.1">
    <property type="nucleotide sequence ID" value="NZ_JANSWM010000035.1"/>
</dbReference>
<dbReference type="SMR" id="A6KYI3"/>
<dbReference type="STRING" id="435590.BVU_0793"/>
<dbReference type="PaxDb" id="435590-BVU_0793"/>
<dbReference type="GeneID" id="93449011"/>
<dbReference type="KEGG" id="bvu:BVU_0793"/>
<dbReference type="eggNOG" id="COG0094">
    <property type="taxonomic scope" value="Bacteria"/>
</dbReference>
<dbReference type="HOGENOM" id="CLU_061015_2_1_10"/>
<dbReference type="BioCyc" id="BVUL435590:G1G59-835-MONOMER"/>
<dbReference type="Proteomes" id="UP000002861">
    <property type="component" value="Chromosome"/>
</dbReference>
<dbReference type="GO" id="GO:1990904">
    <property type="term" value="C:ribonucleoprotein complex"/>
    <property type="evidence" value="ECO:0007669"/>
    <property type="project" value="UniProtKB-KW"/>
</dbReference>
<dbReference type="GO" id="GO:0005840">
    <property type="term" value="C:ribosome"/>
    <property type="evidence" value="ECO:0007669"/>
    <property type="project" value="UniProtKB-KW"/>
</dbReference>
<dbReference type="GO" id="GO:0019843">
    <property type="term" value="F:rRNA binding"/>
    <property type="evidence" value="ECO:0007669"/>
    <property type="project" value="UniProtKB-UniRule"/>
</dbReference>
<dbReference type="GO" id="GO:0003735">
    <property type="term" value="F:structural constituent of ribosome"/>
    <property type="evidence" value="ECO:0007669"/>
    <property type="project" value="InterPro"/>
</dbReference>
<dbReference type="GO" id="GO:0000049">
    <property type="term" value="F:tRNA binding"/>
    <property type="evidence" value="ECO:0007669"/>
    <property type="project" value="UniProtKB-UniRule"/>
</dbReference>
<dbReference type="GO" id="GO:0006412">
    <property type="term" value="P:translation"/>
    <property type="evidence" value="ECO:0007669"/>
    <property type="project" value="UniProtKB-UniRule"/>
</dbReference>
<dbReference type="FunFam" id="3.30.1440.10:FF:000001">
    <property type="entry name" value="50S ribosomal protein L5"/>
    <property type="match status" value="1"/>
</dbReference>
<dbReference type="Gene3D" id="3.30.1440.10">
    <property type="match status" value="1"/>
</dbReference>
<dbReference type="HAMAP" id="MF_01333_B">
    <property type="entry name" value="Ribosomal_uL5_B"/>
    <property type="match status" value="1"/>
</dbReference>
<dbReference type="InterPro" id="IPR002132">
    <property type="entry name" value="Ribosomal_uL5"/>
</dbReference>
<dbReference type="InterPro" id="IPR020930">
    <property type="entry name" value="Ribosomal_uL5_bac-type"/>
</dbReference>
<dbReference type="InterPro" id="IPR031309">
    <property type="entry name" value="Ribosomal_uL5_C"/>
</dbReference>
<dbReference type="InterPro" id="IPR022803">
    <property type="entry name" value="Ribosomal_uL5_dom_sf"/>
</dbReference>
<dbReference type="InterPro" id="IPR031310">
    <property type="entry name" value="Ribosomal_uL5_N"/>
</dbReference>
<dbReference type="NCBIfam" id="NF000585">
    <property type="entry name" value="PRK00010.1"/>
    <property type="match status" value="1"/>
</dbReference>
<dbReference type="PANTHER" id="PTHR11994">
    <property type="entry name" value="60S RIBOSOMAL PROTEIN L11-RELATED"/>
    <property type="match status" value="1"/>
</dbReference>
<dbReference type="Pfam" id="PF00281">
    <property type="entry name" value="Ribosomal_L5"/>
    <property type="match status" value="1"/>
</dbReference>
<dbReference type="Pfam" id="PF00673">
    <property type="entry name" value="Ribosomal_L5_C"/>
    <property type="match status" value="1"/>
</dbReference>
<dbReference type="PIRSF" id="PIRSF002161">
    <property type="entry name" value="Ribosomal_L5"/>
    <property type="match status" value="1"/>
</dbReference>
<dbReference type="SUPFAM" id="SSF55282">
    <property type="entry name" value="RL5-like"/>
    <property type="match status" value="1"/>
</dbReference>
<organism>
    <name type="scientific">Phocaeicola vulgatus (strain ATCC 8482 / DSM 1447 / JCM 5826 / CCUG 4940 / NBRC 14291 / NCTC 11154)</name>
    <name type="common">Bacteroides vulgatus</name>
    <dbReference type="NCBI Taxonomy" id="435590"/>
    <lineage>
        <taxon>Bacteria</taxon>
        <taxon>Pseudomonadati</taxon>
        <taxon>Bacteroidota</taxon>
        <taxon>Bacteroidia</taxon>
        <taxon>Bacteroidales</taxon>
        <taxon>Bacteroidaceae</taxon>
        <taxon>Phocaeicola</taxon>
    </lineage>
</organism>
<evidence type="ECO:0000255" key="1">
    <source>
        <dbReference type="HAMAP-Rule" id="MF_01333"/>
    </source>
</evidence>
<evidence type="ECO:0000305" key="2"/>
<reference key="1">
    <citation type="journal article" date="2007" name="PLoS Biol.">
        <title>Evolution of symbiotic bacteria in the distal human intestine.</title>
        <authorList>
            <person name="Xu J."/>
            <person name="Mahowald M.A."/>
            <person name="Ley R.E."/>
            <person name="Lozupone C.A."/>
            <person name="Hamady M."/>
            <person name="Martens E.C."/>
            <person name="Henrissat B."/>
            <person name="Coutinho P.M."/>
            <person name="Minx P."/>
            <person name="Latreille P."/>
            <person name="Cordum H."/>
            <person name="Van Brunt A."/>
            <person name="Kim K."/>
            <person name="Fulton R.S."/>
            <person name="Fulton L.A."/>
            <person name="Clifton S.W."/>
            <person name="Wilson R.K."/>
            <person name="Knight R.D."/>
            <person name="Gordon J.I."/>
        </authorList>
    </citation>
    <scope>NUCLEOTIDE SEQUENCE [LARGE SCALE GENOMIC DNA]</scope>
    <source>
        <strain>ATCC 8482 / DSM 1447 / JCM 5826 / CCUG 4940 / NBRC 14291 / NCTC 11154</strain>
    </source>
</reference>
<accession>A6KYI3</accession>
<comment type="function">
    <text evidence="1">This is one of the proteins that bind and probably mediate the attachment of the 5S RNA into the large ribosomal subunit, where it forms part of the central protuberance. In the 70S ribosome it contacts protein S13 of the 30S subunit (bridge B1b), connecting the 2 subunits; this bridge is implicated in subunit movement. Contacts the P site tRNA; the 5S rRNA and some of its associated proteins might help stabilize positioning of ribosome-bound tRNAs.</text>
</comment>
<comment type="subunit">
    <text evidence="1">Part of the 50S ribosomal subunit; part of the 5S rRNA/L5/L18/L25 subcomplex. Contacts the 5S rRNA and the P site tRNA. Forms a bridge to the 30S subunit in the 70S ribosome.</text>
</comment>
<comment type="similarity">
    <text evidence="1">Belongs to the universal ribosomal protein uL5 family.</text>
</comment>
<sequence length="185" mass="20860">MSNTASLKKEYAERIAPALKNQFQYSSTMQIPVLKKIVINQGLGMAVADKKIIEVAINELTAITGQKAVATVSRKDIANFKLRKKMPIGVMVTLRRERMYEFLEKLVRVALPRIRDFKGIESKFDGRGNYTLGIQEQIIFPEINIDSITKILGMNITFVTSAPTDEEGYALLKEFGLPFKNSKKD</sequence>
<keyword id="KW-0687">Ribonucleoprotein</keyword>
<keyword id="KW-0689">Ribosomal protein</keyword>
<keyword id="KW-0694">RNA-binding</keyword>
<keyword id="KW-0699">rRNA-binding</keyword>
<keyword id="KW-0820">tRNA-binding</keyword>
<feature type="chain" id="PRO_1000052692" description="Large ribosomal subunit protein uL5">
    <location>
        <begin position="1"/>
        <end position="185"/>
    </location>
</feature>
<protein>
    <recommendedName>
        <fullName evidence="1">Large ribosomal subunit protein uL5</fullName>
    </recommendedName>
    <alternativeName>
        <fullName evidence="2">50S ribosomal protein L5</fullName>
    </alternativeName>
</protein>